<organism>
    <name type="scientific">Ajellomyces capsulatus (strain H143)</name>
    <name type="common">Darling's disease fungus</name>
    <name type="synonym">Histoplasma capsulatum</name>
    <dbReference type="NCBI Taxonomy" id="544712"/>
    <lineage>
        <taxon>Eukaryota</taxon>
        <taxon>Fungi</taxon>
        <taxon>Dikarya</taxon>
        <taxon>Ascomycota</taxon>
        <taxon>Pezizomycotina</taxon>
        <taxon>Eurotiomycetes</taxon>
        <taxon>Eurotiomycetidae</taxon>
        <taxon>Onygenales</taxon>
        <taxon>Ajellomycetaceae</taxon>
        <taxon>Histoplasma</taxon>
    </lineage>
</organism>
<keyword id="KW-0012">Acyltransferase</keyword>
<keyword id="KW-0028">Amino-acid biosynthesis</keyword>
<keyword id="KW-0055">Arginine biosynthesis</keyword>
<keyword id="KW-0068">Autocatalytic cleavage</keyword>
<keyword id="KW-0496">Mitochondrion</keyword>
<keyword id="KW-0511">Multifunctional enzyme</keyword>
<keyword id="KW-1185">Reference proteome</keyword>
<keyword id="KW-0808">Transferase</keyword>
<comment type="function">
    <text evidence="1">Catalyzes two activities which are involved in the cyclic version of arginine biosynthesis: the synthesis of acetylglutamate from glutamate and acetyl-CoA, and of ornithine by transacetylation between acetylornithine and glutamate.</text>
</comment>
<comment type="catalytic activity">
    <reaction evidence="1">
        <text>N(2)-acetyl-L-ornithine + L-glutamate = N-acetyl-L-glutamate + L-ornithine</text>
        <dbReference type="Rhea" id="RHEA:15349"/>
        <dbReference type="ChEBI" id="CHEBI:29985"/>
        <dbReference type="ChEBI" id="CHEBI:44337"/>
        <dbReference type="ChEBI" id="CHEBI:46911"/>
        <dbReference type="ChEBI" id="CHEBI:57805"/>
        <dbReference type="EC" id="2.3.1.35"/>
    </reaction>
</comment>
<comment type="catalytic activity">
    <reaction evidence="1">
        <text>L-glutamate + acetyl-CoA = N-acetyl-L-glutamate + CoA + H(+)</text>
        <dbReference type="Rhea" id="RHEA:24292"/>
        <dbReference type="ChEBI" id="CHEBI:15378"/>
        <dbReference type="ChEBI" id="CHEBI:29985"/>
        <dbReference type="ChEBI" id="CHEBI:44337"/>
        <dbReference type="ChEBI" id="CHEBI:57287"/>
        <dbReference type="ChEBI" id="CHEBI:57288"/>
        <dbReference type="EC" id="2.3.1.1"/>
    </reaction>
</comment>
<comment type="pathway">
    <text evidence="1">Amino-acid biosynthesis; L-arginine biosynthesis; L-ornithine and N-acetyl-L-glutamate from L-glutamate and N(2)-acetyl-L-ornithine (cyclic): step 1/1.</text>
</comment>
<comment type="pathway">
    <text evidence="1">Amino-acid biosynthesis; L-arginine biosynthesis; N(2)-acetyl-L-ornithine from L-glutamate: step 1/4.</text>
</comment>
<comment type="subunit">
    <text evidence="1">Heterodimer of an alpha and a beta chain.</text>
</comment>
<comment type="subcellular location">
    <subcellularLocation>
        <location evidence="1">Mitochondrion matrix</location>
    </subcellularLocation>
</comment>
<comment type="PTM">
    <text evidence="1">The alpha and beta chains are autoproteolytically processed from a single precursor protein within the mitochondrion.</text>
</comment>
<comment type="miscellaneous">
    <text evidence="1">This protein may be expected to contain an N-terminal transit peptide but none has been predicted.</text>
</comment>
<comment type="similarity">
    <text evidence="1">Belongs to the ArgJ family.</text>
</comment>
<sequence>MRNPKSFCVVAGFVRLPKSSLGQVRYYSIPNDVSIPASKGKFIPGSGTYPKGFLVAGAHAGVKESNTQFPDVALICSETPCSAAAVFTTNKFQAAPVQVSKQVLEKRQGAGIRGVVINSGCANAVTGKGGLEDAKMMSAKVDECNGTPSTGPQDTSTLVMSTGVIGQRLPIKKILDAIPTAHSNLASTHSTWLATARAICTTDTFPKLLSRTFTLPSSPNRQYCLAGMTKGAGMIHPNMATLLGILCTDVPISPSALKALLTHAVSRSFNAISIDGDTSTNDTIALLANGAAGGEAITTTSSQDYAAMQTILTSFAQSLAQLVVRDGEGATKFITVRVCNSPSHADAKAIASTIARSPLVKTALYGKDANWGRILCAIGYAQGIAEGTVVPERTSVSFRPVDGSAELKLLVNGEPEAVDEERAARILQDEDLEIVVDLGGGQKGEKGLGGEEGLYWFCDFSHEYVTINGDYRT</sequence>
<accession>C6HSY8</accession>
<protein>
    <recommendedName>
        <fullName evidence="1">Arginine biosynthesis bifunctional protein ArgJ, mitochondrial</fullName>
    </recommendedName>
    <domain>
        <recommendedName>
            <fullName evidence="1">Glutamate N-acetyltransferase</fullName>
            <shortName evidence="1">GAT</shortName>
            <ecNumber evidence="1">2.3.1.35</ecNumber>
        </recommendedName>
        <alternativeName>
            <fullName evidence="1">Ornithine acetyltransferase</fullName>
            <shortName evidence="1">OATase</shortName>
        </alternativeName>
        <alternativeName>
            <fullName evidence="1">Ornithine transacetylase</fullName>
        </alternativeName>
    </domain>
    <domain>
        <recommendedName>
            <fullName evidence="1">Amino-acid acetyltransferase</fullName>
            <ecNumber evidence="1">2.3.1.1</ecNumber>
        </recommendedName>
        <alternativeName>
            <fullName evidence="1">N-acetylglutamate synthase</fullName>
            <shortName evidence="1">AGS</shortName>
        </alternativeName>
    </domain>
    <component>
        <recommendedName>
            <fullName evidence="1">Arginine biosynthesis bifunctional protein ArgJ alpha chain</fullName>
        </recommendedName>
    </component>
    <component>
        <recommendedName>
            <fullName evidence="1">Arginine biosynthesis bifunctional protein ArgJ beta chain</fullName>
        </recommendedName>
    </component>
</protein>
<dbReference type="EC" id="2.3.1.35" evidence="1"/>
<dbReference type="EC" id="2.3.1.1" evidence="1"/>
<dbReference type="EMBL" id="GG692439">
    <property type="protein sequence ID" value="EER36663.1"/>
    <property type="molecule type" value="Genomic_DNA"/>
</dbReference>
<dbReference type="SMR" id="C6HSY8"/>
<dbReference type="STRING" id="544712.C6HSY8"/>
<dbReference type="VEuPathDB" id="FungiDB:HCDG_09319"/>
<dbReference type="eggNOG" id="KOG2786">
    <property type="taxonomic scope" value="Eukaryota"/>
</dbReference>
<dbReference type="HOGENOM" id="CLU_027172_1_0_1"/>
<dbReference type="OMA" id="WGRIVMA"/>
<dbReference type="OrthoDB" id="5233at299071"/>
<dbReference type="UniPathway" id="UPA00068">
    <property type="reaction ID" value="UER00106"/>
</dbReference>
<dbReference type="UniPathway" id="UPA00068">
    <property type="reaction ID" value="UER00111"/>
</dbReference>
<dbReference type="Proteomes" id="UP000002624">
    <property type="component" value="Unassembled WGS sequence"/>
</dbReference>
<dbReference type="GO" id="GO:0005759">
    <property type="term" value="C:mitochondrial matrix"/>
    <property type="evidence" value="ECO:0007669"/>
    <property type="project" value="UniProtKB-SubCell"/>
</dbReference>
<dbReference type="GO" id="GO:0004358">
    <property type="term" value="F:glutamate N-acetyltransferase activity"/>
    <property type="evidence" value="ECO:0007669"/>
    <property type="project" value="UniProtKB-UniRule"/>
</dbReference>
<dbReference type="GO" id="GO:0004042">
    <property type="term" value="F:L-glutamate N-acetyltransferase activity"/>
    <property type="evidence" value="ECO:0007669"/>
    <property type="project" value="UniProtKB-UniRule"/>
</dbReference>
<dbReference type="GO" id="GO:0006526">
    <property type="term" value="P:L-arginine biosynthetic process"/>
    <property type="evidence" value="ECO:0007669"/>
    <property type="project" value="UniProtKB-UniRule"/>
</dbReference>
<dbReference type="GO" id="GO:0006592">
    <property type="term" value="P:ornithine biosynthetic process"/>
    <property type="evidence" value="ECO:0007669"/>
    <property type="project" value="TreeGrafter"/>
</dbReference>
<dbReference type="CDD" id="cd02152">
    <property type="entry name" value="OAT"/>
    <property type="match status" value="1"/>
</dbReference>
<dbReference type="FunFam" id="3.60.70.12:FF:000001">
    <property type="entry name" value="Arginine biosynthesis bifunctional protein ArgJ, chloroplastic"/>
    <property type="match status" value="1"/>
</dbReference>
<dbReference type="FunFam" id="3.10.20.340:FF:000002">
    <property type="entry name" value="Arginine biosynthesis bifunctional protein ArgJ, mitochondrial"/>
    <property type="match status" value="1"/>
</dbReference>
<dbReference type="FunFam" id="3.30.2330.10:FF:000001">
    <property type="entry name" value="Arginine biosynthesis bifunctional protein ArgJ, mitochondrial"/>
    <property type="match status" value="1"/>
</dbReference>
<dbReference type="Gene3D" id="3.30.2330.10">
    <property type="entry name" value="arginine biosynthesis bifunctional protein suprefamily"/>
    <property type="match status" value="1"/>
</dbReference>
<dbReference type="Gene3D" id="3.10.20.340">
    <property type="entry name" value="ArgJ beta chain, C-terminal domain"/>
    <property type="match status" value="1"/>
</dbReference>
<dbReference type="Gene3D" id="3.60.70.12">
    <property type="entry name" value="L-amino peptidase D-ALA esterase/amidase"/>
    <property type="match status" value="1"/>
</dbReference>
<dbReference type="HAMAP" id="MF_01106">
    <property type="entry name" value="ArgJ"/>
    <property type="match status" value="1"/>
</dbReference>
<dbReference type="InterPro" id="IPR002813">
    <property type="entry name" value="Arg_biosynth_ArgJ"/>
</dbReference>
<dbReference type="InterPro" id="IPR016117">
    <property type="entry name" value="ArgJ-like_dom_sf"/>
</dbReference>
<dbReference type="InterPro" id="IPR042195">
    <property type="entry name" value="ArgJ_beta_C"/>
</dbReference>
<dbReference type="NCBIfam" id="TIGR00120">
    <property type="entry name" value="ArgJ"/>
    <property type="match status" value="1"/>
</dbReference>
<dbReference type="NCBIfam" id="NF003802">
    <property type="entry name" value="PRK05388.1"/>
    <property type="match status" value="1"/>
</dbReference>
<dbReference type="PANTHER" id="PTHR23100">
    <property type="entry name" value="ARGININE BIOSYNTHESIS BIFUNCTIONAL PROTEIN ARGJ"/>
    <property type="match status" value="1"/>
</dbReference>
<dbReference type="PANTHER" id="PTHR23100:SF0">
    <property type="entry name" value="ARGININE BIOSYNTHESIS BIFUNCTIONAL PROTEIN ARGJ, MITOCHONDRIAL"/>
    <property type="match status" value="1"/>
</dbReference>
<dbReference type="Pfam" id="PF01960">
    <property type="entry name" value="ArgJ"/>
    <property type="match status" value="1"/>
</dbReference>
<dbReference type="SUPFAM" id="SSF56266">
    <property type="entry name" value="DmpA/ArgJ-like"/>
    <property type="match status" value="1"/>
</dbReference>
<gene>
    <name type="ORF">HCDG_09319</name>
</gene>
<feature type="chain" id="PRO_0000398002" description="Arginine biosynthesis bifunctional protein ArgJ alpha chain" evidence="1">
    <location>
        <begin position="1"/>
        <end position="240"/>
    </location>
</feature>
<feature type="chain" id="PRO_0000398003" description="Arginine biosynthesis bifunctional protein ArgJ beta chain" evidence="1">
    <location>
        <begin position="241"/>
        <end position="473"/>
    </location>
</feature>
<feature type="active site" description="Nucleophile" evidence="1">
    <location>
        <position position="241"/>
    </location>
</feature>
<feature type="binding site" evidence="1">
    <location>
        <position position="201"/>
    </location>
    <ligand>
        <name>substrate</name>
    </ligand>
</feature>
<feature type="binding site" evidence="1">
    <location>
        <position position="230"/>
    </location>
    <ligand>
        <name>substrate</name>
    </ligand>
</feature>
<feature type="binding site" evidence="1">
    <location>
        <position position="241"/>
    </location>
    <ligand>
        <name>substrate</name>
    </ligand>
</feature>
<feature type="binding site" evidence="1">
    <location>
        <position position="328"/>
    </location>
    <ligand>
        <name>substrate</name>
    </ligand>
</feature>
<feature type="binding site" evidence="1">
    <location>
        <position position="468"/>
    </location>
    <ligand>
        <name>substrate</name>
    </ligand>
</feature>
<feature type="binding site" evidence="1">
    <location>
        <position position="473"/>
    </location>
    <ligand>
        <name>substrate</name>
    </ligand>
</feature>
<feature type="site" description="Involved in the stabilization of negative charge on the oxyanion by the formation of the oxyanion hole" evidence="1">
    <location>
        <position position="162"/>
    </location>
</feature>
<feature type="site" description="Involved in the stabilization of negative charge on the oxyanion by the formation of the oxyanion hole" evidence="1">
    <location>
        <position position="163"/>
    </location>
</feature>
<feature type="site" description="Cleavage; by autolysis" evidence="1">
    <location>
        <begin position="240"/>
        <end position="241"/>
    </location>
</feature>
<name>ARGJ_AJECH</name>
<proteinExistence type="inferred from homology"/>
<evidence type="ECO:0000255" key="1">
    <source>
        <dbReference type="HAMAP-Rule" id="MF_03124"/>
    </source>
</evidence>
<reference key="1">
    <citation type="submission" date="2009-05" db="EMBL/GenBank/DDBJ databases">
        <title>The genome sequence of Ajellomyces capsulatus strain H143.</title>
        <authorList>
            <person name="Champion M."/>
            <person name="Cuomo C.A."/>
            <person name="Ma L.-J."/>
            <person name="Henn M.R."/>
            <person name="Sil A."/>
            <person name="Goldman B."/>
            <person name="Young S.K."/>
            <person name="Kodira C.D."/>
            <person name="Zeng Q."/>
            <person name="Koehrsen M."/>
            <person name="Alvarado L."/>
            <person name="Berlin A.M."/>
            <person name="Borenstein D."/>
            <person name="Chen Z."/>
            <person name="Engels R."/>
            <person name="Freedman E."/>
            <person name="Gellesch M."/>
            <person name="Goldberg J."/>
            <person name="Griggs A."/>
            <person name="Gujja S."/>
            <person name="Heiman D.I."/>
            <person name="Hepburn T.A."/>
            <person name="Howarth C."/>
            <person name="Jen D."/>
            <person name="Larson L."/>
            <person name="Lewis B."/>
            <person name="Mehta T."/>
            <person name="Park D."/>
            <person name="Pearson M."/>
            <person name="Roberts A."/>
            <person name="Saif S."/>
            <person name="Shea T.D."/>
            <person name="Shenoy N."/>
            <person name="Sisk P."/>
            <person name="Stolte C."/>
            <person name="Sykes S."/>
            <person name="Walk T."/>
            <person name="White J."/>
            <person name="Yandava C."/>
            <person name="Klein B."/>
            <person name="McEwen J.G."/>
            <person name="Puccia R."/>
            <person name="Goldman G.H."/>
            <person name="Felipe M.S."/>
            <person name="Nino-Vega G."/>
            <person name="San-Blas G."/>
            <person name="Taylor J.W."/>
            <person name="Mendoza L."/>
            <person name="Galagan J.E."/>
            <person name="Nusbaum C."/>
            <person name="Birren B.W."/>
        </authorList>
    </citation>
    <scope>NUCLEOTIDE SEQUENCE [LARGE SCALE GENOMIC DNA]</scope>
    <source>
        <strain>H143</strain>
    </source>
</reference>